<organism>
    <name type="scientific">Influenza A virus (strain A/Udorn/307/1972 H3N2)</name>
    <dbReference type="NCBI Taxonomy" id="381517"/>
    <lineage>
        <taxon>Viruses</taxon>
        <taxon>Riboviria</taxon>
        <taxon>Orthornavirae</taxon>
        <taxon>Negarnaviricota</taxon>
        <taxon>Polyploviricotina</taxon>
        <taxon>Insthoviricetes</taxon>
        <taxon>Articulavirales</taxon>
        <taxon>Orthomyxoviridae</taxon>
        <taxon>Alphainfluenzavirus</taxon>
        <taxon>Alphainfluenzavirus influenzae</taxon>
        <taxon>Influenza A virus</taxon>
    </lineage>
</organism>
<sequence length="757" mass="86467">MDVNPTLLFLKVPAQNAISTTFPYTGDPPYSHGTGTGYTMDTVNRTHQYSEKGKWTTNTETGAPQLNPIDGPLPEDNEPSGYAQTDCVLEAMAFLEESHPGIFENSCLETMEVVQQTRVDRLTQGRQTYDWTLNRNQPAATALANTIEVFRSNGLTANESGRLIDFLKDVMESMDKEEMEITTHFQRKRRVRDNMTKKMVTQRTIGKKKQRVNKRSYLIRALTLNTMTKDAERGKLKRRAIATPGMQIRGFVYFVETLARSICEKLEQSGLPVGGNEKKAKLANVVRKMMTNSQDTELSFTITGDNTKWNENQNPRMFLAMITYITKNQPEWFRNILSIAPIMFSNKMARLGKGYMFESKRMKLRTQIPAEMLASIDLKYFNESTRKKIEKIRPLLIDGTASLSPGMMMGMFNMLSTVLGVSILNLGQKKYTKTTYWWDGLQSSDDFALIVNAPNHEGIQAGVDRFYRTCKLVGINMSKKKSYINRTGTFEFTSFFYRYGFVANFSMELPSFGVSGINESADMSIGVTVIKNNMINNDLGPATAQMALQLFIKDYRYTYRCHRGDTQIQTRRSFELKKLWEQTRSKAGLLVSDGGPNLYNIRNLHIPEVCLKWELMDEDYQGRLCNPLNPFVSHKEIESVNNAVVMPAHGPAKSMEYDAVATTHSWIPKRNRSILNTSQRGILEDEQMYQKCCNLFEKFFPSSSYRRPVGISSMVEAMVSRARIDARIDFESGRIKKEEFAEIMKICSTIEELRRQK</sequence>
<protein>
    <recommendedName>
        <fullName evidence="1">RNA-directed RNA polymerase catalytic subunit</fullName>
        <ecNumber evidence="1">2.7.7.48</ecNumber>
    </recommendedName>
    <alternativeName>
        <fullName evidence="1">Polymerase basic protein 1</fullName>
        <shortName evidence="1">PB1</shortName>
    </alternativeName>
    <alternativeName>
        <fullName evidence="1">RNA-directed RNA polymerase subunit P1</fullName>
    </alternativeName>
</protein>
<dbReference type="EC" id="2.7.7.48" evidence="1"/>
<dbReference type="EMBL" id="DQ508927">
    <property type="protein sequence ID" value="ABF21253.1"/>
    <property type="molecule type" value="Genomic_RNA"/>
</dbReference>
<dbReference type="SMR" id="Q1K9E3"/>
<dbReference type="IntAct" id="Q1K9E3">
    <property type="interactions" value="9"/>
</dbReference>
<dbReference type="Proteomes" id="UP000153055">
    <property type="component" value="Genome"/>
</dbReference>
<dbReference type="GO" id="GO:0030430">
    <property type="term" value="C:host cell cytoplasm"/>
    <property type="evidence" value="ECO:0007669"/>
    <property type="project" value="UniProtKB-SubCell"/>
</dbReference>
<dbReference type="GO" id="GO:0042025">
    <property type="term" value="C:host cell nucleus"/>
    <property type="evidence" value="ECO:0007669"/>
    <property type="project" value="UniProtKB-SubCell"/>
</dbReference>
<dbReference type="GO" id="GO:0000166">
    <property type="term" value="F:nucleotide binding"/>
    <property type="evidence" value="ECO:0007669"/>
    <property type="project" value="UniProtKB-UniRule"/>
</dbReference>
<dbReference type="GO" id="GO:0003723">
    <property type="term" value="F:RNA binding"/>
    <property type="evidence" value="ECO:0007669"/>
    <property type="project" value="InterPro"/>
</dbReference>
<dbReference type="GO" id="GO:0003968">
    <property type="term" value="F:RNA-directed RNA polymerase activity"/>
    <property type="evidence" value="ECO:0007669"/>
    <property type="project" value="UniProtKB-UniRule"/>
</dbReference>
<dbReference type="GO" id="GO:0006351">
    <property type="term" value="P:DNA-templated transcription"/>
    <property type="evidence" value="ECO:0007669"/>
    <property type="project" value="UniProtKB-UniRule"/>
</dbReference>
<dbReference type="GO" id="GO:0039657">
    <property type="term" value="P:symbiont-mediated suppression of host gene expression"/>
    <property type="evidence" value="ECO:0007669"/>
    <property type="project" value="UniProtKB-KW"/>
</dbReference>
<dbReference type="GO" id="GO:0039523">
    <property type="term" value="P:symbiont-mediated suppression of host mRNA transcription via inhibition of RNA polymerase II activity"/>
    <property type="evidence" value="ECO:0007669"/>
    <property type="project" value="UniProtKB-UniRule"/>
</dbReference>
<dbReference type="GO" id="GO:0039694">
    <property type="term" value="P:viral RNA genome replication"/>
    <property type="evidence" value="ECO:0007669"/>
    <property type="project" value="UniProtKB-UniRule"/>
</dbReference>
<dbReference type="GO" id="GO:0019083">
    <property type="term" value="P:viral transcription"/>
    <property type="evidence" value="ECO:0007669"/>
    <property type="project" value="UniProtKB-KW"/>
</dbReference>
<dbReference type="Gene3D" id="6.10.140.720">
    <property type="match status" value="1"/>
</dbReference>
<dbReference type="HAMAP" id="MF_04065">
    <property type="entry name" value="INFV_RDRP"/>
    <property type="match status" value="1"/>
</dbReference>
<dbReference type="InterPro" id="IPR007099">
    <property type="entry name" value="RNA-dir_pol_NSvirus"/>
</dbReference>
<dbReference type="InterPro" id="IPR001407">
    <property type="entry name" value="RNA_pol_PB1_influenza"/>
</dbReference>
<dbReference type="Pfam" id="PF00602">
    <property type="entry name" value="Flu_PB1"/>
    <property type="match status" value="1"/>
</dbReference>
<dbReference type="PIRSF" id="PIRSF000827">
    <property type="entry name" value="RdRPol_OMV"/>
    <property type="match status" value="1"/>
</dbReference>
<dbReference type="PROSITE" id="PS50525">
    <property type="entry name" value="RDRP_SSRNA_NEG_SEG"/>
    <property type="match status" value="1"/>
</dbReference>
<organismHost>
    <name type="scientific">Aves</name>
    <dbReference type="NCBI Taxonomy" id="8782"/>
</organismHost>
<organismHost>
    <name type="scientific">Cetacea</name>
    <name type="common">whales</name>
    <dbReference type="NCBI Taxonomy" id="9721"/>
</organismHost>
<organismHost>
    <name type="scientific">Homo sapiens</name>
    <name type="common">Human</name>
    <dbReference type="NCBI Taxonomy" id="9606"/>
</organismHost>
<organismHost>
    <name type="scientific">Phocidae</name>
    <name type="common">true seals</name>
    <dbReference type="NCBI Taxonomy" id="9709"/>
</organismHost>
<organismHost>
    <name type="scientific">Sus scrofa</name>
    <name type="common">Pig</name>
    <dbReference type="NCBI Taxonomy" id="9823"/>
</organismHost>
<gene>
    <name evidence="1" type="primary">PB1</name>
</gene>
<keyword id="KW-1262">Eukaryotic host gene expression shutoff by virus</keyword>
<keyword id="KW-1191">Eukaryotic host transcription shutoff by virus</keyword>
<keyword id="KW-1035">Host cytoplasm</keyword>
<keyword id="KW-1190">Host gene expression shutoff by virus</keyword>
<keyword id="KW-1048">Host nucleus</keyword>
<keyword id="KW-0945">Host-virus interaction</keyword>
<keyword id="KW-1104">Inhibition of host RNA polymerase II by virus</keyword>
<keyword id="KW-0547">Nucleotide-binding</keyword>
<keyword id="KW-0548">Nucleotidyltransferase</keyword>
<keyword id="KW-0597">Phosphoprotein</keyword>
<keyword id="KW-0696">RNA-directed RNA polymerase</keyword>
<keyword id="KW-0808">Transferase</keyword>
<keyword id="KW-0693">Viral RNA replication</keyword>
<keyword id="KW-1195">Viral transcription</keyword>
<evidence type="ECO:0000255" key="1">
    <source>
        <dbReference type="HAMAP-Rule" id="MF_04065"/>
    </source>
</evidence>
<evidence type="ECO:0000256" key="2">
    <source>
        <dbReference type="SAM" id="MobiDB-lite"/>
    </source>
</evidence>
<name>RDRP_I72A2</name>
<feature type="chain" id="PRO_0000279617" description="RNA-directed RNA polymerase catalytic subunit">
    <location>
        <begin position="1"/>
        <end position="757"/>
    </location>
</feature>
<feature type="domain" description="RdRp catalytic" evidence="1">
    <location>
        <begin position="286"/>
        <end position="483"/>
    </location>
</feature>
<feature type="region of interest" description="Disordered" evidence="2">
    <location>
        <begin position="50"/>
        <end position="82"/>
    </location>
</feature>
<feature type="region of interest" description="Promoter-binding site" evidence="1">
    <location>
        <begin position="249"/>
        <end position="256"/>
    </location>
</feature>
<feature type="short sequence motif" description="Nuclear localization signal" evidence="1">
    <location>
        <begin position="187"/>
        <end position="195"/>
    </location>
</feature>
<feature type="short sequence motif" description="Nuclear localization signal" evidence="1">
    <location>
        <begin position="203"/>
        <end position="216"/>
    </location>
</feature>
<feature type="compositionally biased region" description="Polar residues" evidence="2">
    <location>
        <begin position="55"/>
        <end position="64"/>
    </location>
</feature>
<reference key="1">
    <citation type="submission" date="2006-04" db="EMBL/GenBank/DDBJ databases">
        <title>Complete genome sequencing and analysis of selected influenza virus vaccine strains spanning six decades (1933-1999).</title>
        <authorList>
            <person name="Mbawuike I.N."/>
            <person name="Zhang Y."/>
            <person name="Yamada R.E."/>
            <person name="Nino D."/>
            <person name="Bui H.-H."/>
            <person name="Sette A."/>
            <person name="Couch R.B."/>
        </authorList>
    </citation>
    <scope>NUCLEOTIDE SEQUENCE [GENOMIC RNA]</scope>
</reference>
<comment type="function">
    <text evidence="1">RNA-dependent RNA polymerase which is responsible for replication and transcription of virus RNA segments. The transcription of viral mRNAs occurs by a unique mechanism called cap-snatching. 5' methylated caps of cellular mRNAs are cleaved after 10-13 nucleotides by PA. In turn, these short capped RNAs are used as primers by PB1 for transcription of viral mRNAs. During virus replication, PB1 initiates RNA synthesis and copy vRNA into complementary RNA (cRNA) which in turn serves as a template for the production of more vRNAs.</text>
</comment>
<comment type="catalytic activity">
    <reaction evidence="1">
        <text>RNA(n) + a ribonucleoside 5'-triphosphate = RNA(n+1) + diphosphate</text>
        <dbReference type="Rhea" id="RHEA:21248"/>
        <dbReference type="Rhea" id="RHEA-COMP:14527"/>
        <dbReference type="Rhea" id="RHEA-COMP:17342"/>
        <dbReference type="ChEBI" id="CHEBI:33019"/>
        <dbReference type="ChEBI" id="CHEBI:61557"/>
        <dbReference type="ChEBI" id="CHEBI:140395"/>
        <dbReference type="EC" id="2.7.7.48"/>
    </reaction>
</comment>
<comment type="subunit">
    <text evidence="1">Influenza RNA polymerase is composed of three subunits: PB1, PB2 and PA. Interacts (via N-terminus) with PA (via C-terminus). Interacts (via C-terminus) with PB2 (via N-terminus); this interaction is essential for transcription initiation.</text>
</comment>
<comment type="subcellular location">
    <subcellularLocation>
        <location evidence="1">Host nucleus</location>
    </subcellularLocation>
    <subcellularLocation>
        <location evidence="1">Host cytoplasm</location>
    </subcellularLocation>
</comment>
<comment type="PTM">
    <text evidence="1">Phosphorylated by host PRKCA.</text>
</comment>
<comment type="similarity">
    <text evidence="1">Belongs to the influenza viruses polymerase PB1 family.</text>
</comment>
<accession>Q1K9E3</accession>
<proteinExistence type="inferred from homology"/>